<name>MURE_GEOSL</name>
<reference key="1">
    <citation type="journal article" date="2003" name="Science">
        <title>Genome of Geobacter sulfurreducens: metal reduction in subsurface environments.</title>
        <authorList>
            <person name="Methe B.A."/>
            <person name="Nelson K.E."/>
            <person name="Eisen J.A."/>
            <person name="Paulsen I.T."/>
            <person name="Nelson W.C."/>
            <person name="Heidelberg J.F."/>
            <person name="Wu D."/>
            <person name="Wu M."/>
            <person name="Ward N.L."/>
            <person name="Beanan M.J."/>
            <person name="Dodson R.J."/>
            <person name="Madupu R."/>
            <person name="Brinkac L.M."/>
            <person name="Daugherty S.C."/>
            <person name="DeBoy R.T."/>
            <person name="Durkin A.S."/>
            <person name="Gwinn M.L."/>
            <person name="Kolonay J.F."/>
            <person name="Sullivan S.A."/>
            <person name="Haft D.H."/>
            <person name="Selengut J."/>
            <person name="Davidsen T.M."/>
            <person name="Zafar N."/>
            <person name="White O."/>
            <person name="Tran B."/>
            <person name="Romero C."/>
            <person name="Forberger H.A."/>
            <person name="Weidman J.F."/>
            <person name="Khouri H.M."/>
            <person name="Feldblyum T.V."/>
            <person name="Utterback T.R."/>
            <person name="Van Aken S.E."/>
            <person name="Lovley D.R."/>
            <person name="Fraser C.M."/>
        </authorList>
    </citation>
    <scope>NUCLEOTIDE SEQUENCE [LARGE SCALE GENOMIC DNA]</scope>
    <source>
        <strain>ATCC 51573 / DSM 12127 / PCA</strain>
    </source>
</reference>
<dbReference type="EC" id="6.3.2.13" evidence="1"/>
<dbReference type="EMBL" id="AE017180">
    <property type="protein sequence ID" value="AAR36465.1"/>
    <property type="molecule type" value="Genomic_DNA"/>
</dbReference>
<dbReference type="RefSeq" id="NP_954115.1">
    <property type="nucleotide sequence ID" value="NC_002939.5"/>
</dbReference>
<dbReference type="RefSeq" id="WP_010943699.1">
    <property type="nucleotide sequence ID" value="NC_002939.5"/>
</dbReference>
<dbReference type="SMR" id="Q748D2"/>
<dbReference type="FunCoup" id="Q748D2">
    <property type="interactions" value="601"/>
</dbReference>
<dbReference type="STRING" id="243231.GSU3074"/>
<dbReference type="EnsemblBacteria" id="AAR36465">
    <property type="protein sequence ID" value="AAR36465"/>
    <property type="gene ID" value="GSU3074"/>
</dbReference>
<dbReference type="KEGG" id="gsu:GSU3074"/>
<dbReference type="PATRIC" id="fig|243231.5.peg.3098"/>
<dbReference type="eggNOG" id="COG0769">
    <property type="taxonomic scope" value="Bacteria"/>
</dbReference>
<dbReference type="HOGENOM" id="CLU_022291_4_1_7"/>
<dbReference type="InParanoid" id="Q748D2"/>
<dbReference type="OrthoDB" id="9800958at2"/>
<dbReference type="UniPathway" id="UPA00219"/>
<dbReference type="Proteomes" id="UP000000577">
    <property type="component" value="Chromosome"/>
</dbReference>
<dbReference type="GO" id="GO:0005737">
    <property type="term" value="C:cytoplasm"/>
    <property type="evidence" value="ECO:0007669"/>
    <property type="project" value="UniProtKB-SubCell"/>
</dbReference>
<dbReference type="GO" id="GO:0005524">
    <property type="term" value="F:ATP binding"/>
    <property type="evidence" value="ECO:0007669"/>
    <property type="project" value="UniProtKB-UniRule"/>
</dbReference>
<dbReference type="GO" id="GO:0000287">
    <property type="term" value="F:magnesium ion binding"/>
    <property type="evidence" value="ECO:0007669"/>
    <property type="project" value="UniProtKB-UniRule"/>
</dbReference>
<dbReference type="GO" id="GO:0008765">
    <property type="term" value="F:UDP-N-acetylmuramoylalanyl-D-glutamate-2,6-diaminopimelate ligase activity"/>
    <property type="evidence" value="ECO:0007669"/>
    <property type="project" value="UniProtKB-UniRule"/>
</dbReference>
<dbReference type="GO" id="GO:0051301">
    <property type="term" value="P:cell division"/>
    <property type="evidence" value="ECO:0007669"/>
    <property type="project" value="UniProtKB-KW"/>
</dbReference>
<dbReference type="GO" id="GO:0071555">
    <property type="term" value="P:cell wall organization"/>
    <property type="evidence" value="ECO:0007669"/>
    <property type="project" value="UniProtKB-KW"/>
</dbReference>
<dbReference type="GO" id="GO:0009252">
    <property type="term" value="P:peptidoglycan biosynthetic process"/>
    <property type="evidence" value="ECO:0007669"/>
    <property type="project" value="UniProtKB-UniRule"/>
</dbReference>
<dbReference type="GO" id="GO:0008360">
    <property type="term" value="P:regulation of cell shape"/>
    <property type="evidence" value="ECO:0007669"/>
    <property type="project" value="UniProtKB-KW"/>
</dbReference>
<dbReference type="FunFam" id="3.40.1390.10:FF:000005">
    <property type="entry name" value="UDP-N-acetylmuramoyl-L-alanyl-D-glutamate--2,6-diaminopimelate ligase"/>
    <property type="match status" value="1"/>
</dbReference>
<dbReference type="FunFam" id="3.90.190.20:FF:000006">
    <property type="entry name" value="UDP-N-acetylmuramoyl-L-alanyl-D-glutamate--2,6-diaminopimelate ligase"/>
    <property type="match status" value="1"/>
</dbReference>
<dbReference type="Gene3D" id="3.90.190.20">
    <property type="entry name" value="Mur ligase, C-terminal domain"/>
    <property type="match status" value="1"/>
</dbReference>
<dbReference type="Gene3D" id="3.40.1190.10">
    <property type="entry name" value="Mur-like, catalytic domain"/>
    <property type="match status" value="1"/>
</dbReference>
<dbReference type="Gene3D" id="3.40.1390.10">
    <property type="entry name" value="MurE/MurF, N-terminal domain"/>
    <property type="match status" value="1"/>
</dbReference>
<dbReference type="HAMAP" id="MF_00208">
    <property type="entry name" value="MurE"/>
    <property type="match status" value="1"/>
</dbReference>
<dbReference type="InterPro" id="IPR036565">
    <property type="entry name" value="Mur-like_cat_sf"/>
</dbReference>
<dbReference type="InterPro" id="IPR004101">
    <property type="entry name" value="Mur_ligase_C"/>
</dbReference>
<dbReference type="InterPro" id="IPR036615">
    <property type="entry name" value="Mur_ligase_C_dom_sf"/>
</dbReference>
<dbReference type="InterPro" id="IPR013221">
    <property type="entry name" value="Mur_ligase_cen"/>
</dbReference>
<dbReference type="InterPro" id="IPR000713">
    <property type="entry name" value="Mur_ligase_N"/>
</dbReference>
<dbReference type="InterPro" id="IPR035911">
    <property type="entry name" value="MurE/MurF_N"/>
</dbReference>
<dbReference type="InterPro" id="IPR005761">
    <property type="entry name" value="UDP-N-AcMur-Glu-dNH2Pim_ligase"/>
</dbReference>
<dbReference type="NCBIfam" id="TIGR01085">
    <property type="entry name" value="murE"/>
    <property type="match status" value="1"/>
</dbReference>
<dbReference type="NCBIfam" id="NF001124">
    <property type="entry name" value="PRK00139.1-2"/>
    <property type="match status" value="1"/>
</dbReference>
<dbReference type="NCBIfam" id="NF001126">
    <property type="entry name" value="PRK00139.1-4"/>
    <property type="match status" value="1"/>
</dbReference>
<dbReference type="PANTHER" id="PTHR23135">
    <property type="entry name" value="MUR LIGASE FAMILY MEMBER"/>
    <property type="match status" value="1"/>
</dbReference>
<dbReference type="PANTHER" id="PTHR23135:SF4">
    <property type="entry name" value="UDP-N-ACETYLMURAMOYL-L-ALANYL-D-GLUTAMATE--2,6-DIAMINOPIMELATE LIGASE MURE HOMOLOG, CHLOROPLASTIC"/>
    <property type="match status" value="1"/>
</dbReference>
<dbReference type="Pfam" id="PF01225">
    <property type="entry name" value="Mur_ligase"/>
    <property type="match status" value="1"/>
</dbReference>
<dbReference type="Pfam" id="PF02875">
    <property type="entry name" value="Mur_ligase_C"/>
    <property type="match status" value="1"/>
</dbReference>
<dbReference type="Pfam" id="PF08245">
    <property type="entry name" value="Mur_ligase_M"/>
    <property type="match status" value="1"/>
</dbReference>
<dbReference type="SUPFAM" id="SSF53623">
    <property type="entry name" value="MurD-like peptide ligases, catalytic domain"/>
    <property type="match status" value="1"/>
</dbReference>
<dbReference type="SUPFAM" id="SSF53244">
    <property type="entry name" value="MurD-like peptide ligases, peptide-binding domain"/>
    <property type="match status" value="1"/>
</dbReference>
<dbReference type="SUPFAM" id="SSF63418">
    <property type="entry name" value="MurE/MurF N-terminal domain"/>
    <property type="match status" value="1"/>
</dbReference>
<gene>
    <name evidence="1" type="primary">murE</name>
    <name type="ordered locus">GSU3074</name>
</gene>
<evidence type="ECO:0000255" key="1">
    <source>
        <dbReference type="HAMAP-Rule" id="MF_00208"/>
    </source>
</evidence>
<proteinExistence type="inferred from homology"/>
<sequence>MRLEDLARVVDPIAVRGDLTREINGLYCDSRQVRSGGLFFALKGVASDGHDFIASARERGAVAVVLEDETRAPCGMEWIRVGDARLAMSRMAALFYGQPTDGVPVVGITGTNGKTTTTYLVEAIMSRAGIPAAVLGTISYRFGSKLVPAPHTTPESVELQATIRDLVDEGAKAVVMEVSSHALEQRRVDSCRFDVAVFTNLTRDHLDYHRDMESYFGSKARLFTELVAPDGVKPRRAAAINRDDSYGARLVETAVAPVISYGLAADAAVRAENVVFSVDGIAGTLVTPFGTAPFHSHLLGRFNLYNILAAVAAGVGLGLSLDVILGGIEGDVRVPGRLERVHNERGVTVLVDYAHTGDALENVLKTVSELATGRIITVFGCGGDRDRGKRPVMAEISGRYSHLTIVTSDNPRTEEPAAIIKEVLTGIIPMGLREYDARELNRGFVEKGFTSLVSRHDAIRLAATVAVAGDIVLLAGKGHEDYQIIGTEKFHFDDREEAIAAFRSSDSGE</sequence>
<keyword id="KW-0067">ATP-binding</keyword>
<keyword id="KW-0131">Cell cycle</keyword>
<keyword id="KW-0132">Cell division</keyword>
<keyword id="KW-0133">Cell shape</keyword>
<keyword id="KW-0961">Cell wall biogenesis/degradation</keyword>
<keyword id="KW-0963">Cytoplasm</keyword>
<keyword id="KW-0436">Ligase</keyword>
<keyword id="KW-0460">Magnesium</keyword>
<keyword id="KW-0547">Nucleotide-binding</keyword>
<keyword id="KW-0573">Peptidoglycan synthesis</keyword>
<keyword id="KW-1185">Reference proteome</keyword>
<comment type="function">
    <text evidence="1">Catalyzes the addition of meso-diaminopimelic acid to the nucleotide precursor UDP-N-acetylmuramoyl-L-alanyl-D-glutamate (UMAG) in the biosynthesis of bacterial cell-wall peptidoglycan.</text>
</comment>
<comment type="catalytic activity">
    <reaction evidence="1">
        <text>UDP-N-acetyl-alpha-D-muramoyl-L-alanyl-D-glutamate + meso-2,6-diaminopimelate + ATP = UDP-N-acetyl-alpha-D-muramoyl-L-alanyl-gamma-D-glutamyl-meso-2,6-diaminopimelate + ADP + phosphate + H(+)</text>
        <dbReference type="Rhea" id="RHEA:23676"/>
        <dbReference type="ChEBI" id="CHEBI:15378"/>
        <dbReference type="ChEBI" id="CHEBI:30616"/>
        <dbReference type="ChEBI" id="CHEBI:43474"/>
        <dbReference type="ChEBI" id="CHEBI:57791"/>
        <dbReference type="ChEBI" id="CHEBI:83900"/>
        <dbReference type="ChEBI" id="CHEBI:83905"/>
        <dbReference type="ChEBI" id="CHEBI:456216"/>
        <dbReference type="EC" id="6.3.2.13"/>
    </reaction>
</comment>
<comment type="cofactor">
    <cofactor evidence="1">
        <name>Mg(2+)</name>
        <dbReference type="ChEBI" id="CHEBI:18420"/>
    </cofactor>
</comment>
<comment type="pathway">
    <text evidence="1">Cell wall biogenesis; peptidoglycan biosynthesis.</text>
</comment>
<comment type="subcellular location">
    <subcellularLocation>
        <location evidence="1">Cytoplasm</location>
    </subcellularLocation>
</comment>
<comment type="PTM">
    <text evidence="1">Carboxylation is probably crucial for Mg(2+) binding and, consequently, for the gamma-phosphate positioning of ATP.</text>
</comment>
<comment type="similarity">
    <text evidence="1">Belongs to the MurCDEF family. MurE subfamily.</text>
</comment>
<accession>Q748D2</accession>
<organism>
    <name type="scientific">Geobacter sulfurreducens (strain ATCC 51573 / DSM 12127 / PCA)</name>
    <dbReference type="NCBI Taxonomy" id="243231"/>
    <lineage>
        <taxon>Bacteria</taxon>
        <taxon>Pseudomonadati</taxon>
        <taxon>Thermodesulfobacteriota</taxon>
        <taxon>Desulfuromonadia</taxon>
        <taxon>Geobacterales</taxon>
        <taxon>Geobacteraceae</taxon>
        <taxon>Geobacter</taxon>
    </lineage>
</organism>
<protein>
    <recommendedName>
        <fullName evidence="1">UDP-N-acetylmuramoyl-L-alanyl-D-glutamate--2,6-diaminopimelate ligase</fullName>
        <ecNumber evidence="1">6.3.2.13</ecNumber>
    </recommendedName>
    <alternativeName>
        <fullName evidence="1">Meso-A2pm-adding enzyme</fullName>
    </alternativeName>
    <alternativeName>
        <fullName evidence="1">Meso-diaminopimelate-adding enzyme</fullName>
    </alternativeName>
    <alternativeName>
        <fullName evidence="1">UDP-MurNAc-L-Ala-D-Glu:meso-diaminopimelate ligase</fullName>
    </alternativeName>
    <alternativeName>
        <fullName evidence="1">UDP-MurNAc-tripeptide synthetase</fullName>
    </alternativeName>
    <alternativeName>
        <fullName evidence="1">UDP-N-acetylmuramyl-tripeptide synthetase</fullName>
    </alternativeName>
</protein>
<feature type="chain" id="PRO_1000012354" description="UDP-N-acetylmuramoyl-L-alanyl-D-glutamate--2,6-diaminopimelate ligase">
    <location>
        <begin position="1"/>
        <end position="509"/>
    </location>
</feature>
<feature type="short sequence motif" description="Meso-diaminopimelate recognition motif">
    <location>
        <begin position="409"/>
        <end position="412"/>
    </location>
</feature>
<feature type="binding site" evidence="1">
    <location>
        <position position="30"/>
    </location>
    <ligand>
        <name>UDP-N-acetyl-alpha-D-muramoyl-L-alanyl-D-glutamate</name>
        <dbReference type="ChEBI" id="CHEBI:83900"/>
    </ligand>
</feature>
<feature type="binding site" evidence="1">
    <location>
        <begin position="110"/>
        <end position="116"/>
    </location>
    <ligand>
        <name>ATP</name>
        <dbReference type="ChEBI" id="CHEBI:30616"/>
    </ligand>
</feature>
<feature type="binding site" evidence="1">
    <location>
        <begin position="152"/>
        <end position="153"/>
    </location>
    <ligand>
        <name>UDP-N-acetyl-alpha-D-muramoyl-L-alanyl-D-glutamate</name>
        <dbReference type="ChEBI" id="CHEBI:83900"/>
    </ligand>
</feature>
<feature type="binding site" evidence="1">
    <location>
        <position position="179"/>
    </location>
    <ligand>
        <name>UDP-N-acetyl-alpha-D-muramoyl-L-alanyl-D-glutamate</name>
        <dbReference type="ChEBI" id="CHEBI:83900"/>
    </ligand>
</feature>
<feature type="binding site" evidence="1">
    <location>
        <position position="185"/>
    </location>
    <ligand>
        <name>UDP-N-acetyl-alpha-D-muramoyl-L-alanyl-D-glutamate</name>
        <dbReference type="ChEBI" id="CHEBI:83900"/>
    </ligand>
</feature>
<feature type="binding site" evidence="1">
    <location>
        <position position="187"/>
    </location>
    <ligand>
        <name>UDP-N-acetyl-alpha-D-muramoyl-L-alanyl-D-glutamate</name>
        <dbReference type="ChEBI" id="CHEBI:83900"/>
    </ligand>
</feature>
<feature type="binding site" evidence="1">
    <location>
        <position position="385"/>
    </location>
    <ligand>
        <name>meso-2,6-diaminopimelate</name>
        <dbReference type="ChEBI" id="CHEBI:57791"/>
    </ligand>
</feature>
<feature type="binding site" evidence="1">
    <location>
        <begin position="409"/>
        <end position="412"/>
    </location>
    <ligand>
        <name>meso-2,6-diaminopimelate</name>
        <dbReference type="ChEBI" id="CHEBI:57791"/>
    </ligand>
</feature>
<feature type="binding site" evidence="1">
    <location>
        <position position="476"/>
    </location>
    <ligand>
        <name>meso-2,6-diaminopimelate</name>
        <dbReference type="ChEBI" id="CHEBI:57791"/>
    </ligand>
</feature>
<feature type="binding site" evidence="1">
    <location>
        <position position="480"/>
    </location>
    <ligand>
        <name>meso-2,6-diaminopimelate</name>
        <dbReference type="ChEBI" id="CHEBI:57791"/>
    </ligand>
</feature>
<feature type="modified residue" description="N6-carboxylysine" evidence="1">
    <location>
        <position position="219"/>
    </location>
</feature>